<organism>
    <name type="scientific">Lactobacillus gasseri (strain ATCC 33323 / DSM 20243 / BCRC 14619 / CIP 102991 / JCM 1131 / KCTC 3163 / NCIMB 11718 / NCTC 13722 / AM63)</name>
    <dbReference type="NCBI Taxonomy" id="324831"/>
    <lineage>
        <taxon>Bacteria</taxon>
        <taxon>Bacillati</taxon>
        <taxon>Bacillota</taxon>
        <taxon>Bacilli</taxon>
        <taxon>Lactobacillales</taxon>
        <taxon>Lactobacillaceae</taxon>
        <taxon>Lactobacillus</taxon>
    </lineage>
</organism>
<reference key="1">
    <citation type="journal article" date="2006" name="Proc. Natl. Acad. Sci. U.S.A.">
        <title>Comparative genomics of the lactic acid bacteria.</title>
        <authorList>
            <person name="Makarova K.S."/>
            <person name="Slesarev A."/>
            <person name="Wolf Y.I."/>
            <person name="Sorokin A."/>
            <person name="Mirkin B."/>
            <person name="Koonin E.V."/>
            <person name="Pavlov A."/>
            <person name="Pavlova N."/>
            <person name="Karamychev V."/>
            <person name="Polouchine N."/>
            <person name="Shakhova V."/>
            <person name="Grigoriev I."/>
            <person name="Lou Y."/>
            <person name="Rohksar D."/>
            <person name="Lucas S."/>
            <person name="Huang K."/>
            <person name="Goodstein D.M."/>
            <person name="Hawkins T."/>
            <person name="Plengvidhya V."/>
            <person name="Welker D."/>
            <person name="Hughes J."/>
            <person name="Goh Y."/>
            <person name="Benson A."/>
            <person name="Baldwin K."/>
            <person name="Lee J.-H."/>
            <person name="Diaz-Muniz I."/>
            <person name="Dosti B."/>
            <person name="Smeianov V."/>
            <person name="Wechter W."/>
            <person name="Barabote R."/>
            <person name="Lorca G."/>
            <person name="Altermann E."/>
            <person name="Barrangou R."/>
            <person name="Ganesan B."/>
            <person name="Xie Y."/>
            <person name="Rawsthorne H."/>
            <person name="Tamir D."/>
            <person name="Parker C."/>
            <person name="Breidt F."/>
            <person name="Broadbent J.R."/>
            <person name="Hutkins R."/>
            <person name="O'Sullivan D."/>
            <person name="Steele J."/>
            <person name="Unlu G."/>
            <person name="Saier M.H. Jr."/>
            <person name="Klaenhammer T."/>
            <person name="Richardson P."/>
            <person name="Kozyavkin S."/>
            <person name="Weimer B.C."/>
            <person name="Mills D.A."/>
        </authorList>
    </citation>
    <scope>NUCLEOTIDE SEQUENCE [LARGE SCALE GENOMIC DNA]</scope>
    <source>
        <strain>ATCC 33323 / DSM 20243 / BCRC 14619 / CIP 102991 / JCM 1131 / KCTC 3163 / NCIMB 11718 / NCTC 13722 / AM63</strain>
    </source>
</reference>
<name>WHIA_LACGA</name>
<protein>
    <recommendedName>
        <fullName evidence="1">Probable cell division protein WhiA</fullName>
    </recommendedName>
</protein>
<sequence length="313" mass="35574">MVSYASDVKKELTSLPVHPEHAKAELAAFLRMNGVLSLHDHQFSLDITTENPAIARRIFSLIKTAYGIEPLLIVSKKMKLKKNYQYLVRLQKQVHEILSDLEIFDSDNGLITGIPEKIMTSEQRAMSYLRGAFLAAGSVNNPETSRYHLEIYSLYENHNNDLLKLMNSFFYLNAKATKRRNGYIVYLKEAEKIGDFLHIVGAVNAMLAFEDLRIMRDMRNSVNRLVNCDTANLKKTANAAAKQVEDIQLIEKKVGLENLPEKLAILAHFRLTHPELSLKEVAAQVPDGPISKSGVNHRFQKIREMAQQLKEEN</sequence>
<accession>Q042E7</accession>
<gene>
    <name evidence="1" type="primary">whiA</name>
    <name type="ordered locus">LGAS_1313</name>
</gene>
<comment type="function">
    <text evidence="1">Involved in cell division and chromosome segregation.</text>
</comment>
<comment type="similarity">
    <text evidence="1">Belongs to the WhiA family.</text>
</comment>
<keyword id="KW-0131">Cell cycle</keyword>
<keyword id="KW-0132">Cell division</keyword>
<keyword id="KW-0238">DNA-binding</keyword>
<evidence type="ECO:0000255" key="1">
    <source>
        <dbReference type="HAMAP-Rule" id="MF_01420"/>
    </source>
</evidence>
<feature type="chain" id="PRO_0000376500" description="Probable cell division protein WhiA">
    <location>
        <begin position="1"/>
        <end position="313"/>
    </location>
</feature>
<feature type="DNA-binding region" description="H-T-H motif" evidence="1">
    <location>
        <begin position="277"/>
        <end position="311"/>
    </location>
</feature>
<dbReference type="EMBL" id="CP000413">
    <property type="protein sequence ID" value="ABJ60675.1"/>
    <property type="molecule type" value="Genomic_DNA"/>
</dbReference>
<dbReference type="RefSeq" id="WP_003647008.1">
    <property type="nucleotide sequence ID" value="NZ_WBMG01000002.1"/>
</dbReference>
<dbReference type="SMR" id="Q042E7"/>
<dbReference type="GeneID" id="29639911"/>
<dbReference type="KEGG" id="lga:LGAS_1313"/>
<dbReference type="HOGENOM" id="CLU_053282_1_0_9"/>
<dbReference type="BioCyc" id="LGAS324831:G1G6Y-1307-MONOMER"/>
<dbReference type="Proteomes" id="UP000000664">
    <property type="component" value="Chromosome"/>
</dbReference>
<dbReference type="GO" id="GO:0003677">
    <property type="term" value="F:DNA binding"/>
    <property type="evidence" value="ECO:0007669"/>
    <property type="project" value="UniProtKB-UniRule"/>
</dbReference>
<dbReference type="GO" id="GO:0051301">
    <property type="term" value="P:cell division"/>
    <property type="evidence" value="ECO:0007669"/>
    <property type="project" value="UniProtKB-UniRule"/>
</dbReference>
<dbReference type="GO" id="GO:0043937">
    <property type="term" value="P:regulation of sporulation"/>
    <property type="evidence" value="ECO:0007669"/>
    <property type="project" value="InterPro"/>
</dbReference>
<dbReference type="Gene3D" id="3.10.28.10">
    <property type="entry name" value="Homing endonucleases"/>
    <property type="match status" value="1"/>
</dbReference>
<dbReference type="HAMAP" id="MF_01420">
    <property type="entry name" value="HTH_type_WhiA"/>
    <property type="match status" value="1"/>
</dbReference>
<dbReference type="InterPro" id="IPR027434">
    <property type="entry name" value="Homing_endonucl"/>
</dbReference>
<dbReference type="InterPro" id="IPR018478">
    <property type="entry name" value="Sporu_reg_WhiA_N_dom"/>
</dbReference>
<dbReference type="InterPro" id="IPR003802">
    <property type="entry name" value="Sporulation_regulator_WhiA"/>
</dbReference>
<dbReference type="InterPro" id="IPR023054">
    <property type="entry name" value="Sporulation_regulator_WhiA_C"/>
</dbReference>
<dbReference type="InterPro" id="IPR039518">
    <property type="entry name" value="WhiA_LAGLIDADG_dom"/>
</dbReference>
<dbReference type="NCBIfam" id="TIGR00647">
    <property type="entry name" value="DNA_bind_WhiA"/>
    <property type="match status" value="1"/>
</dbReference>
<dbReference type="PANTHER" id="PTHR37307">
    <property type="entry name" value="CELL DIVISION PROTEIN WHIA-RELATED"/>
    <property type="match status" value="1"/>
</dbReference>
<dbReference type="PANTHER" id="PTHR37307:SF1">
    <property type="entry name" value="CELL DIVISION PROTEIN WHIA-RELATED"/>
    <property type="match status" value="1"/>
</dbReference>
<dbReference type="Pfam" id="PF02650">
    <property type="entry name" value="HTH_WhiA"/>
    <property type="match status" value="1"/>
</dbReference>
<dbReference type="Pfam" id="PF14527">
    <property type="entry name" value="LAGLIDADG_WhiA"/>
    <property type="match status" value="1"/>
</dbReference>
<dbReference type="Pfam" id="PF10298">
    <property type="entry name" value="WhiA_N"/>
    <property type="match status" value="1"/>
</dbReference>
<dbReference type="SUPFAM" id="SSF55608">
    <property type="entry name" value="Homing endonucleases"/>
    <property type="match status" value="1"/>
</dbReference>
<proteinExistence type="inferred from homology"/>